<dbReference type="EC" id="2.6.1.100" evidence="2"/>
<dbReference type="EC" id="2.6.1.101" evidence="2"/>
<dbReference type="EMBL" id="AJ579650">
    <property type="protein sequence ID" value="CAE22472.1"/>
    <property type="molecule type" value="Genomic_RNA"/>
</dbReference>
<dbReference type="EMBL" id="AJ810851">
    <property type="protein sequence ID" value="CAH18555.1"/>
    <property type="molecule type" value="Genomic_DNA"/>
</dbReference>
<dbReference type="RefSeq" id="WP_253672092.1">
    <property type="nucleotide sequence ID" value="NZ_JAMTCP010000038.1"/>
</dbReference>
<dbReference type="SMR" id="Q2MF17"/>
<dbReference type="BRENDA" id="2.6.1.100">
    <property type="organism ID" value="7970"/>
</dbReference>
<dbReference type="UniPathway" id="UPA00907">
    <property type="reaction ID" value="UER00922"/>
</dbReference>
<dbReference type="UniPathway" id="UPA00971"/>
<dbReference type="GO" id="GO:0030170">
    <property type="term" value="F:pyridoxal phosphate binding"/>
    <property type="evidence" value="ECO:0007669"/>
    <property type="project" value="TreeGrafter"/>
</dbReference>
<dbReference type="GO" id="GO:0008483">
    <property type="term" value="F:transaminase activity"/>
    <property type="evidence" value="ECO:0007669"/>
    <property type="project" value="UniProtKB-KW"/>
</dbReference>
<dbReference type="GO" id="GO:0017000">
    <property type="term" value="P:antibiotic biosynthetic process"/>
    <property type="evidence" value="ECO:0007669"/>
    <property type="project" value="UniProtKB-KW"/>
</dbReference>
<dbReference type="GO" id="GO:0000271">
    <property type="term" value="P:polysaccharide biosynthetic process"/>
    <property type="evidence" value="ECO:0007669"/>
    <property type="project" value="TreeGrafter"/>
</dbReference>
<dbReference type="CDD" id="cd00616">
    <property type="entry name" value="AHBA_syn"/>
    <property type="match status" value="1"/>
</dbReference>
<dbReference type="Gene3D" id="3.90.1150.10">
    <property type="entry name" value="Aspartate Aminotransferase, domain 1"/>
    <property type="match status" value="1"/>
</dbReference>
<dbReference type="Gene3D" id="3.40.640.10">
    <property type="entry name" value="Type I PLP-dependent aspartate aminotransferase-like (Major domain)"/>
    <property type="match status" value="1"/>
</dbReference>
<dbReference type="InterPro" id="IPR000653">
    <property type="entry name" value="DegT/StrS_aminotransferase"/>
</dbReference>
<dbReference type="InterPro" id="IPR015424">
    <property type="entry name" value="PyrdxlP-dep_Trfase"/>
</dbReference>
<dbReference type="InterPro" id="IPR015421">
    <property type="entry name" value="PyrdxlP-dep_Trfase_major"/>
</dbReference>
<dbReference type="InterPro" id="IPR015422">
    <property type="entry name" value="PyrdxlP-dep_Trfase_small"/>
</dbReference>
<dbReference type="PANTHER" id="PTHR30244:SF34">
    <property type="entry name" value="DTDP-4-AMINO-4,6-DIDEOXYGALACTOSE TRANSAMINASE"/>
    <property type="match status" value="1"/>
</dbReference>
<dbReference type="PANTHER" id="PTHR30244">
    <property type="entry name" value="TRANSAMINASE"/>
    <property type="match status" value="1"/>
</dbReference>
<dbReference type="Pfam" id="PF01041">
    <property type="entry name" value="DegT_DnrJ_EryC1"/>
    <property type="match status" value="1"/>
</dbReference>
<dbReference type="PIRSF" id="PIRSF000390">
    <property type="entry name" value="PLP_StrS"/>
    <property type="match status" value="1"/>
</dbReference>
<dbReference type="SUPFAM" id="SSF53383">
    <property type="entry name" value="PLP-dependent transferases"/>
    <property type="match status" value="1"/>
</dbReference>
<name>GLDSA_STRSD</name>
<protein>
    <recommendedName>
        <fullName>L-glutamine:2-deoxy-scyllo-inosose aminotransferase</fullName>
        <shortName>L-glutamine:DOI aminotransferase</shortName>
        <ecNumber evidence="2">2.6.1.100</ecNumber>
    </recommendedName>
    <alternativeName>
        <fullName>L-glutamine:3-amino-2,3-dideoxy-scyllo-inosose aminotransferase</fullName>
        <shortName>L-glutamine:amino-DOI aminotransferase</shortName>
        <ecNumber evidence="2">2.6.1.101</ecNumber>
    </alternativeName>
</protein>
<organism>
    <name type="scientific">Streptoalloteichus tenebrarius (strain ATCC 17920 / DSM 40477 / JCM 4838 / CBS 697.72 / NBRC 16177 / NCIMB 11028 / NRRL B-12390 / A12253. 1 / ISP 5477)</name>
    <name type="common">Streptomyces tenebrarius</name>
    <dbReference type="NCBI Taxonomy" id="1933"/>
    <lineage>
        <taxon>Bacteria</taxon>
        <taxon>Bacillati</taxon>
        <taxon>Actinomycetota</taxon>
        <taxon>Actinomycetes</taxon>
        <taxon>Pseudonocardiales</taxon>
        <taxon>Pseudonocardiaceae</taxon>
        <taxon>Streptoalloteichus</taxon>
    </lineage>
</organism>
<keyword id="KW-0032">Aminotransferase</keyword>
<keyword id="KW-0045">Antibiotic biosynthesis</keyword>
<keyword id="KW-0663">Pyridoxal phosphate</keyword>
<keyword id="KW-0808">Transferase</keyword>
<accession>Q2MF17</accession>
<accession>Q70IY2</accession>
<gene>
    <name type="primary">tbmB</name>
    <name type="synonym">tobS1</name>
</gene>
<comment type="function">
    <text evidence="3">Catalyzes the PLP-dependent transamination of 2-deoxy-scyllo-inosose (2-DOI) to form 2-deoxy-scyllo-inosamine (2-DOIA) using L-glutamine as the amino donor. Also catalyzes the transamination of 3-amino-2,3-dideoxy-scyllo-inosose (keto-2-DOIA) into 2-deoxystreptamine (2-DOS).</text>
</comment>
<comment type="catalytic activity">
    <reaction evidence="2">
        <text>2-deoxy-L-scyllo-inosose + L-glutamine = 2-deoxy-scyllo-inosamine + 2-oxoglutaramate</text>
        <dbReference type="Rhea" id="RHEA:34147"/>
        <dbReference type="ChEBI" id="CHEBI:16769"/>
        <dbReference type="ChEBI" id="CHEBI:58359"/>
        <dbReference type="ChEBI" id="CHEBI:64796"/>
        <dbReference type="ChEBI" id="CHEBI:65003"/>
        <dbReference type="EC" id="2.6.1.100"/>
    </reaction>
</comment>
<comment type="catalytic activity">
    <reaction evidence="2">
        <text>3-amino-2,3-dideoxy-scyllo-inosose + L-glutamine = 2-deoxystreptamine + 2-oxoglutaramate</text>
        <dbReference type="Rhea" id="RHEA:34151"/>
        <dbReference type="ChEBI" id="CHEBI:16769"/>
        <dbReference type="ChEBI" id="CHEBI:58359"/>
        <dbReference type="ChEBI" id="CHEBI:65002"/>
        <dbReference type="ChEBI" id="CHEBI:65069"/>
        <dbReference type="EC" id="2.6.1.101"/>
    </reaction>
</comment>
<comment type="cofactor">
    <cofactor evidence="1">
        <name>pyridoxal 5'-phosphate</name>
        <dbReference type="ChEBI" id="CHEBI:597326"/>
    </cofactor>
</comment>
<comment type="pathway">
    <text>Metabolic intermediate biosynthesis; 2-deoxystreptamine biosynthesis; 2-deoxystreptamine from D-glucose 6-phosphate: step 2/4.</text>
</comment>
<comment type="pathway">
    <text>Antibiotic biosynthesis; tobramycin biosynthesis.</text>
</comment>
<comment type="similarity">
    <text evidence="4">Belongs to the DegT/DnrJ/EryC1 family. L-glutamine:2-deoxy-scyllo-inosose/scyllo-inosose aminotransferase subfamily.</text>
</comment>
<evidence type="ECO:0000250" key="1"/>
<evidence type="ECO:0000250" key="2">
    <source>
        <dbReference type="UniProtKB" id="Q6L739"/>
    </source>
</evidence>
<evidence type="ECO:0000269" key="3">
    <source>
    </source>
</evidence>
<evidence type="ECO:0000305" key="4"/>
<reference key="1">
    <citation type="journal article" date="2004" name="FEMS Microbiol. Lett.">
        <title>Isolation and characterization of the tobramycin biosynthetic gene cluster from Streptomyces tenebrarius.</title>
        <authorList>
            <person name="Kharel M.K."/>
            <person name="Basnet D.B."/>
            <person name="Lee H.C."/>
            <person name="Liou K."/>
            <person name="Woo J.S."/>
            <person name="Kim B.-G."/>
            <person name="Sohng J.K."/>
        </authorList>
    </citation>
    <scope>NUCLEOTIDE SEQUENCE [GENOMIC DNA]</scope>
</reference>
<reference key="2">
    <citation type="submission" date="2004-08" db="EMBL/GenBank/DDBJ databases">
        <title>Comparison of the gene clusters for the biosynthesis of the aminoglycoside antibiotics tobramycin-apramycin (Streptomyces tenebrarius DSM 40477), and hygromycin B (Streptomyces hygroscopicus subsp. hygroscopicus DSM 40578).</title>
        <authorList>
            <person name="Aboshanab K.M.A."/>
            <person name="Schmidt-Beissner H."/>
            <person name="Wehmeier U.F."/>
            <person name="Welzel K."/>
            <person name="Vente A."/>
            <person name="Piepersberg W."/>
        </authorList>
    </citation>
    <scope>NUCLEOTIDE SEQUENCE [GENOMIC DNA]</scope>
</reference>
<reference key="3">
    <citation type="journal article" date="2005" name="Bioorg. Med. Chem. Lett.">
        <title>Characterization of L-glutamine:2-deoxy-scyllo-inosose aminotransferase (tbmB) from Streptomyces tenebrarius.</title>
        <authorList>
            <person name="Kharel M.K."/>
            <person name="Subba B."/>
            <person name="Lee H.C."/>
            <person name="Liou K."/>
            <person name="Sohng J.K."/>
        </authorList>
    </citation>
    <scope>FUNCTION</scope>
</reference>
<proteinExistence type="inferred from homology"/>
<feature type="chain" id="PRO_0000233023" description="L-glutamine:2-deoxy-scyllo-inosose aminotransferase">
    <location>
        <begin position="1"/>
        <end position="424"/>
    </location>
</feature>
<feature type="modified residue" description="N6-(pyridoxal phosphate)lysine" evidence="1">
    <location>
        <position position="202"/>
    </location>
</feature>
<sequence length="424" mass="45593">MPVHLAINNGTPVRTRPWPVWPQPARGALDALERVLRSGRWAISGPYRGIESAERRFARDFAAYNGVAHCVPAASGTASLMLALESCGVGVGDEVIAPGLSWVASASTIVGVNAVPVLVDIDPRTLCLDPAAVEAAITPATKAVVVVHLYSAVADLDALRAVADRHGLPLIEDCAQAHGAEHRGRKVGSVGDVGTFSMQHSKVLTSGEGGAAITNSAELARRMEHLRADGRCYPDTAPAPGRMELVETGELMGSNRCLSEFQAAVLVEQLRELDEQNALRRRNAELLNTLLAEQGLRPQATSPGTTSRTYYVYAAELPDDAFVGLPITTVTEALTAELGFPISPAYAPLHTNRLYAPASRRRFALGEEHEKRIDPARFHLPVCERLTRRLITFHHAALLGDESDMHDIAAAVAKVLRHHGELRA</sequence>